<dbReference type="EMBL" id="CP000802">
    <property type="protein sequence ID" value="ABV08323.1"/>
    <property type="molecule type" value="Genomic_DNA"/>
</dbReference>
<dbReference type="RefSeq" id="WP_001076742.1">
    <property type="nucleotide sequence ID" value="NC_009800.1"/>
</dbReference>
<dbReference type="SMR" id="A8A719"/>
<dbReference type="GeneID" id="75204588"/>
<dbReference type="KEGG" id="ecx:EcHS_A4145"/>
<dbReference type="HOGENOM" id="CLU_013430_3_0_6"/>
<dbReference type="GO" id="GO:0005886">
    <property type="term" value="C:plasma membrane"/>
    <property type="evidence" value="ECO:0007669"/>
    <property type="project" value="UniProtKB-SubCell"/>
</dbReference>
<dbReference type="GO" id="GO:0015086">
    <property type="term" value="F:cadmium ion transmembrane transporter activity"/>
    <property type="evidence" value="ECO:0007669"/>
    <property type="project" value="UniProtKB-UniRule"/>
</dbReference>
<dbReference type="GO" id="GO:0015093">
    <property type="term" value="F:ferrous iron transmembrane transporter activity"/>
    <property type="evidence" value="ECO:0007669"/>
    <property type="project" value="TreeGrafter"/>
</dbReference>
<dbReference type="GO" id="GO:0046872">
    <property type="term" value="F:metal ion binding"/>
    <property type="evidence" value="ECO:0007669"/>
    <property type="project" value="UniProtKB-KW"/>
</dbReference>
<dbReference type="GO" id="GO:0015341">
    <property type="term" value="F:zinc efflux antiporter activity"/>
    <property type="evidence" value="ECO:0007669"/>
    <property type="project" value="TreeGrafter"/>
</dbReference>
<dbReference type="GO" id="GO:0006882">
    <property type="term" value="P:intracellular zinc ion homeostasis"/>
    <property type="evidence" value="ECO:0007669"/>
    <property type="project" value="TreeGrafter"/>
</dbReference>
<dbReference type="FunFam" id="1.20.1510.10:FF:000001">
    <property type="entry name" value="Ferrous-iron efflux pump FieF"/>
    <property type="match status" value="1"/>
</dbReference>
<dbReference type="FunFam" id="3.30.70.1350:FF:000002">
    <property type="entry name" value="Ferrous-iron efflux pump FieF"/>
    <property type="match status" value="1"/>
</dbReference>
<dbReference type="Gene3D" id="1.20.1510.10">
    <property type="entry name" value="Cation efflux protein transmembrane domain"/>
    <property type="match status" value="1"/>
</dbReference>
<dbReference type="Gene3D" id="3.30.70.1350">
    <property type="entry name" value="Cation efflux protein, cytoplasmic domain"/>
    <property type="match status" value="1"/>
</dbReference>
<dbReference type="HAMAP" id="MF_01425">
    <property type="entry name" value="Cation_efflux_FieF"/>
    <property type="match status" value="1"/>
</dbReference>
<dbReference type="InterPro" id="IPR002524">
    <property type="entry name" value="Cation_efflux"/>
</dbReference>
<dbReference type="InterPro" id="IPR027470">
    <property type="entry name" value="Cation_efflux_CTD"/>
</dbReference>
<dbReference type="InterPro" id="IPR036837">
    <property type="entry name" value="Cation_efflux_CTD_sf"/>
</dbReference>
<dbReference type="InterPro" id="IPR023783">
    <property type="entry name" value="Cation_efflux_FieF"/>
</dbReference>
<dbReference type="InterPro" id="IPR027469">
    <property type="entry name" value="Cation_efflux_TMD_sf"/>
</dbReference>
<dbReference type="InterPro" id="IPR050291">
    <property type="entry name" value="CDF_Transporter"/>
</dbReference>
<dbReference type="NCBIfam" id="TIGR01297">
    <property type="entry name" value="CDF"/>
    <property type="match status" value="1"/>
</dbReference>
<dbReference type="NCBIfam" id="NF007064">
    <property type="entry name" value="PRK09509.1"/>
    <property type="match status" value="1"/>
</dbReference>
<dbReference type="PANTHER" id="PTHR43840:SF41">
    <property type="entry name" value="CATION-EFFLUX PUMP FIEF"/>
    <property type="match status" value="1"/>
</dbReference>
<dbReference type="PANTHER" id="PTHR43840">
    <property type="entry name" value="MITOCHONDRIAL METAL TRANSPORTER 1-RELATED"/>
    <property type="match status" value="1"/>
</dbReference>
<dbReference type="Pfam" id="PF01545">
    <property type="entry name" value="Cation_efflux"/>
    <property type="match status" value="1"/>
</dbReference>
<dbReference type="Pfam" id="PF16916">
    <property type="entry name" value="ZT_dimer"/>
    <property type="match status" value="1"/>
</dbReference>
<dbReference type="SUPFAM" id="SSF160240">
    <property type="entry name" value="Cation efflux protein cytoplasmic domain-like"/>
    <property type="match status" value="1"/>
</dbReference>
<dbReference type="SUPFAM" id="SSF161111">
    <property type="entry name" value="Cation efflux protein transmembrane domain-like"/>
    <property type="match status" value="1"/>
</dbReference>
<reference key="1">
    <citation type="journal article" date="2008" name="J. Bacteriol.">
        <title>The pangenome structure of Escherichia coli: comparative genomic analysis of E. coli commensal and pathogenic isolates.</title>
        <authorList>
            <person name="Rasko D.A."/>
            <person name="Rosovitz M.J."/>
            <person name="Myers G.S.A."/>
            <person name="Mongodin E.F."/>
            <person name="Fricke W.F."/>
            <person name="Gajer P."/>
            <person name="Crabtree J."/>
            <person name="Sebaihia M."/>
            <person name="Thomson N.R."/>
            <person name="Chaudhuri R."/>
            <person name="Henderson I.R."/>
            <person name="Sperandio V."/>
            <person name="Ravel J."/>
        </authorList>
    </citation>
    <scope>NUCLEOTIDE SEQUENCE [LARGE SCALE GENOMIC DNA]</scope>
    <source>
        <strain>HS</strain>
    </source>
</reference>
<keyword id="KW-0997">Cell inner membrane</keyword>
<keyword id="KW-1003">Cell membrane</keyword>
<keyword id="KW-0406">Ion transport</keyword>
<keyword id="KW-0408">Iron</keyword>
<keyword id="KW-0410">Iron transport</keyword>
<keyword id="KW-0472">Membrane</keyword>
<keyword id="KW-0479">Metal-binding</keyword>
<keyword id="KW-0812">Transmembrane</keyword>
<keyword id="KW-1133">Transmembrane helix</keyword>
<keyword id="KW-0813">Transport</keyword>
<keyword id="KW-0862">Zinc</keyword>
<keyword id="KW-0864">Zinc transport</keyword>
<evidence type="ECO:0000255" key="1">
    <source>
        <dbReference type="HAMAP-Rule" id="MF_01425"/>
    </source>
</evidence>
<name>FIEF_ECOHS</name>
<comment type="function">
    <text evidence="1">Divalent metal cation transporter which exports Zn(2+), Cd(2+) and possibly Fe(2+). May be involved in zinc and iron detoxification by efflux.</text>
</comment>
<comment type="catalytic activity">
    <reaction evidence="1">
        <text>Zn(2+)(in) + H(+)(out) = Zn(2+)(out) + H(+)(in)</text>
        <dbReference type="Rhea" id="RHEA:28839"/>
        <dbReference type="ChEBI" id="CHEBI:15378"/>
        <dbReference type="ChEBI" id="CHEBI:29105"/>
    </reaction>
</comment>
<comment type="catalytic activity">
    <reaction evidence="1">
        <text>Cd(2+)(in) + H(+)(out) = Cd(2+)(out) + H(+)(in)</text>
        <dbReference type="Rhea" id="RHEA:28739"/>
        <dbReference type="ChEBI" id="CHEBI:15378"/>
        <dbReference type="ChEBI" id="CHEBI:48775"/>
    </reaction>
</comment>
<comment type="catalytic activity">
    <reaction evidence="1">
        <text>Fe(2+)(in) + H(+)(out) = Fe(2+)(out) + H(+)(in)</text>
        <dbReference type="Rhea" id="RHEA:29439"/>
        <dbReference type="ChEBI" id="CHEBI:15378"/>
        <dbReference type="ChEBI" id="CHEBI:29033"/>
    </reaction>
</comment>
<comment type="subunit">
    <text evidence="1">Homodimer.</text>
</comment>
<comment type="subcellular location">
    <subcellularLocation>
        <location evidence="1">Cell inner membrane</location>
        <topology evidence="1">Multi-pass membrane protein</topology>
    </subcellularLocation>
</comment>
<comment type="similarity">
    <text evidence="1">Belongs to the cation diffusion facilitator (CDF) transporter (TC 2.A.4) family. FieF subfamily.</text>
</comment>
<gene>
    <name evidence="1" type="primary">fieF</name>
    <name type="ordered locus">EcHS_A4145</name>
</gene>
<organism>
    <name type="scientific">Escherichia coli O9:H4 (strain HS)</name>
    <dbReference type="NCBI Taxonomy" id="331112"/>
    <lineage>
        <taxon>Bacteria</taxon>
        <taxon>Pseudomonadati</taxon>
        <taxon>Pseudomonadota</taxon>
        <taxon>Gammaproteobacteria</taxon>
        <taxon>Enterobacterales</taxon>
        <taxon>Enterobacteriaceae</taxon>
        <taxon>Escherichia</taxon>
    </lineage>
</organism>
<proteinExistence type="inferred from homology"/>
<feature type="chain" id="PRO_1000068512" description="Cation-efflux pump FieF">
    <location>
        <begin position="1"/>
        <end position="300"/>
    </location>
</feature>
<feature type="transmembrane region" description="Helical" evidence="1">
    <location>
        <begin position="12"/>
        <end position="32"/>
    </location>
</feature>
<feature type="transmembrane region" description="Helical" evidence="1">
    <location>
        <begin position="39"/>
        <end position="59"/>
    </location>
</feature>
<feature type="transmembrane region" description="Helical" evidence="1">
    <location>
        <begin position="82"/>
        <end position="102"/>
    </location>
</feature>
<feature type="transmembrane region" description="Helical" evidence="1">
    <location>
        <begin position="114"/>
        <end position="134"/>
    </location>
</feature>
<feature type="transmembrane region" description="Helical" evidence="1">
    <location>
        <begin position="156"/>
        <end position="176"/>
    </location>
</feature>
<feature type="transmembrane region" description="Helical" evidence="1">
    <location>
        <begin position="178"/>
        <end position="198"/>
    </location>
</feature>
<feature type="binding site" evidence="1">
    <location>
        <position position="45"/>
    </location>
    <ligand>
        <name>Zn(2+)</name>
        <dbReference type="ChEBI" id="CHEBI:29105"/>
    </ligand>
</feature>
<feature type="binding site" evidence="1">
    <location>
        <position position="49"/>
    </location>
    <ligand>
        <name>Zn(2+)</name>
        <dbReference type="ChEBI" id="CHEBI:29105"/>
    </ligand>
</feature>
<feature type="binding site" evidence="1">
    <location>
        <position position="153"/>
    </location>
    <ligand>
        <name>Zn(2+)</name>
        <dbReference type="ChEBI" id="CHEBI:29105"/>
    </ligand>
</feature>
<feature type="binding site" evidence="1">
    <location>
        <position position="157"/>
    </location>
    <ligand>
        <name>Zn(2+)</name>
        <dbReference type="ChEBI" id="CHEBI:29105"/>
    </ligand>
</feature>
<accession>A8A719</accession>
<protein>
    <recommendedName>
        <fullName evidence="1">Cation-efflux pump FieF</fullName>
    </recommendedName>
</protein>
<sequence length="300" mass="32927">MNQSYGRLVSRAAIAATAMASLLLLIKIFAWWYTGSVSILAALVDSLVDIGASLTNLLVVRYSLQPADDNHSFGHGKAESLAALAQSMFISGSALFLFLTGIQHLISPTPMTDPGVGVIVTIVALICTIILVSFQRWVVRRTQSQAVRADMLHYQSDVMMNGAILLALGLSWYGWHRADALFALGIGIYILYSALRMGYEAVQSLLDRALPDEERQEIIDIVTSWPGVSGAHDLRTRQSGPTRFIQIHLEMEDSLPLVQAHMVADQVEQAILRRFPGSDVIIHQDPCSVVPREGKRSMLS</sequence>